<reference key="1">
    <citation type="journal article" date="2008" name="Proc. Natl. Acad. Sci. U.S.A.">
        <title>Nitrogen fixation island and rhizosphere competence traits in the genome of root-associated Pseudomonas stutzeri A1501.</title>
        <authorList>
            <person name="Yan Y."/>
            <person name="Yang J."/>
            <person name="Dou Y."/>
            <person name="Chen M."/>
            <person name="Ping S."/>
            <person name="Peng J."/>
            <person name="Lu W."/>
            <person name="Zhang W."/>
            <person name="Yao Z."/>
            <person name="Li H."/>
            <person name="Liu W."/>
            <person name="He S."/>
            <person name="Geng L."/>
            <person name="Zhang X."/>
            <person name="Yang F."/>
            <person name="Yu H."/>
            <person name="Zhan Y."/>
            <person name="Li D."/>
            <person name="Lin Z."/>
            <person name="Wang Y."/>
            <person name="Elmerich C."/>
            <person name="Lin M."/>
            <person name="Jin Q."/>
        </authorList>
    </citation>
    <scope>NUCLEOTIDE SEQUENCE [LARGE SCALE GENOMIC DNA]</scope>
    <source>
        <strain>A1501</strain>
    </source>
</reference>
<keyword id="KW-0963">Cytoplasm</keyword>
<keyword id="KW-0328">Glycosyltransferase</keyword>
<keyword id="KW-0660">Purine salvage</keyword>
<keyword id="KW-1185">Reference proteome</keyword>
<keyword id="KW-0808">Transferase</keyword>
<evidence type="ECO:0000255" key="1">
    <source>
        <dbReference type="HAMAP-Rule" id="MF_01184"/>
    </source>
</evidence>
<evidence type="ECO:0000305" key="2"/>
<name>XPT_STUS1</name>
<gene>
    <name evidence="1" type="primary">xpt</name>
    <name type="ordered locus">PST_0487</name>
</gene>
<accession>A4VGU2</accession>
<proteinExistence type="inferred from homology"/>
<organism>
    <name type="scientific">Stutzerimonas stutzeri (strain A1501)</name>
    <name type="common">Pseudomonas stutzeri</name>
    <dbReference type="NCBI Taxonomy" id="379731"/>
    <lineage>
        <taxon>Bacteria</taxon>
        <taxon>Pseudomonadati</taxon>
        <taxon>Pseudomonadota</taxon>
        <taxon>Gammaproteobacteria</taxon>
        <taxon>Pseudomonadales</taxon>
        <taxon>Pseudomonadaceae</taxon>
        <taxon>Stutzerimonas</taxon>
    </lineage>
</organism>
<sequence>MEQLKDKIRSHGIVLSDRVLKVDAFLNHQIDPVLMQAIGREFARRFRDDGITKIVTIEASGIAPAVMAGLELGVPVIFARKHQSLTLHDNLLTATVYSFTKQVESTIAVSTQHLSANDRVLIIDDFLANGKAAKGLISIINQAGASIAGLGIVIEKSFQTGRKELEEAGYRVESLARVASLADGAVQFID</sequence>
<comment type="function">
    <text evidence="1">Converts the preformed base xanthine, a product of nucleic acid breakdown, to xanthosine 5'-monophosphate (XMP), so it can be reused for RNA or DNA synthesis.</text>
</comment>
<comment type="catalytic activity">
    <reaction evidence="1">
        <text>XMP + diphosphate = xanthine + 5-phospho-alpha-D-ribose 1-diphosphate</text>
        <dbReference type="Rhea" id="RHEA:10800"/>
        <dbReference type="ChEBI" id="CHEBI:17712"/>
        <dbReference type="ChEBI" id="CHEBI:33019"/>
        <dbReference type="ChEBI" id="CHEBI:57464"/>
        <dbReference type="ChEBI" id="CHEBI:58017"/>
        <dbReference type="EC" id="2.4.2.22"/>
    </reaction>
</comment>
<comment type="pathway">
    <text evidence="1">Purine metabolism; XMP biosynthesis via salvage pathway; XMP from xanthine: step 1/1.</text>
</comment>
<comment type="subunit">
    <text evidence="1">Homodimer.</text>
</comment>
<comment type="subcellular location">
    <subcellularLocation>
        <location evidence="1">Cytoplasm</location>
    </subcellularLocation>
</comment>
<comment type="similarity">
    <text evidence="1">Belongs to the purine/pyrimidine phosphoribosyltransferase family. Xpt subfamily.</text>
</comment>
<comment type="sequence caution" evidence="2">
    <conflict type="erroneous initiation">
        <sequence resource="EMBL-CDS" id="ABP78193"/>
    </conflict>
</comment>
<feature type="chain" id="PRO_0000339737" description="Xanthine phosphoribosyltransferase">
    <location>
        <begin position="1"/>
        <end position="190"/>
    </location>
</feature>
<feature type="binding site" evidence="1">
    <location>
        <position position="20"/>
    </location>
    <ligand>
        <name>xanthine</name>
        <dbReference type="ChEBI" id="CHEBI:17712"/>
    </ligand>
</feature>
<feature type="binding site" evidence="1">
    <location>
        <position position="27"/>
    </location>
    <ligand>
        <name>xanthine</name>
        <dbReference type="ChEBI" id="CHEBI:17712"/>
    </ligand>
</feature>
<feature type="binding site" evidence="1">
    <location>
        <begin position="128"/>
        <end position="132"/>
    </location>
    <ligand>
        <name>5-phospho-alpha-D-ribose 1-diphosphate</name>
        <dbReference type="ChEBI" id="CHEBI:58017"/>
    </ligand>
</feature>
<feature type="binding site" evidence="1">
    <location>
        <position position="156"/>
    </location>
    <ligand>
        <name>xanthine</name>
        <dbReference type="ChEBI" id="CHEBI:17712"/>
    </ligand>
</feature>
<dbReference type="EC" id="2.4.2.22" evidence="1"/>
<dbReference type="EMBL" id="CP000304">
    <property type="protein sequence ID" value="ABP78193.1"/>
    <property type="status" value="ALT_INIT"/>
    <property type="molecule type" value="Genomic_DNA"/>
</dbReference>
<dbReference type="RefSeq" id="WP_013981607.1">
    <property type="nucleotide sequence ID" value="NC_009434.1"/>
</dbReference>
<dbReference type="SMR" id="A4VGU2"/>
<dbReference type="KEGG" id="psa:PST_0487"/>
<dbReference type="eggNOG" id="COG0503">
    <property type="taxonomic scope" value="Bacteria"/>
</dbReference>
<dbReference type="HOGENOM" id="CLU_099015_0_0_6"/>
<dbReference type="UniPathway" id="UPA00602">
    <property type="reaction ID" value="UER00658"/>
</dbReference>
<dbReference type="Proteomes" id="UP000000233">
    <property type="component" value="Chromosome"/>
</dbReference>
<dbReference type="GO" id="GO:0005737">
    <property type="term" value="C:cytoplasm"/>
    <property type="evidence" value="ECO:0007669"/>
    <property type="project" value="UniProtKB-SubCell"/>
</dbReference>
<dbReference type="GO" id="GO:0000310">
    <property type="term" value="F:xanthine phosphoribosyltransferase activity"/>
    <property type="evidence" value="ECO:0007669"/>
    <property type="project" value="UniProtKB-UniRule"/>
</dbReference>
<dbReference type="GO" id="GO:0006166">
    <property type="term" value="P:purine ribonucleoside salvage"/>
    <property type="evidence" value="ECO:0007669"/>
    <property type="project" value="UniProtKB-KW"/>
</dbReference>
<dbReference type="GO" id="GO:0046110">
    <property type="term" value="P:xanthine metabolic process"/>
    <property type="evidence" value="ECO:0007669"/>
    <property type="project" value="InterPro"/>
</dbReference>
<dbReference type="GO" id="GO:0032265">
    <property type="term" value="P:XMP salvage"/>
    <property type="evidence" value="ECO:0007669"/>
    <property type="project" value="UniProtKB-UniRule"/>
</dbReference>
<dbReference type="CDD" id="cd06223">
    <property type="entry name" value="PRTases_typeI"/>
    <property type="match status" value="1"/>
</dbReference>
<dbReference type="FunFam" id="3.40.50.2020:FF:000027">
    <property type="entry name" value="Xanthine phosphoribosyltransferase"/>
    <property type="match status" value="1"/>
</dbReference>
<dbReference type="Gene3D" id="3.40.50.2020">
    <property type="match status" value="1"/>
</dbReference>
<dbReference type="HAMAP" id="MF_01184">
    <property type="entry name" value="XPRTase"/>
    <property type="match status" value="1"/>
</dbReference>
<dbReference type="InterPro" id="IPR000836">
    <property type="entry name" value="PRibTrfase_dom"/>
</dbReference>
<dbReference type="InterPro" id="IPR029057">
    <property type="entry name" value="PRTase-like"/>
</dbReference>
<dbReference type="InterPro" id="IPR050118">
    <property type="entry name" value="Pur/Pyrimidine_PRTase"/>
</dbReference>
<dbReference type="InterPro" id="IPR010079">
    <property type="entry name" value="Xanthine_PRibTrfase"/>
</dbReference>
<dbReference type="NCBIfam" id="NF006671">
    <property type="entry name" value="PRK09219.1"/>
    <property type="match status" value="1"/>
</dbReference>
<dbReference type="NCBIfam" id="TIGR01744">
    <property type="entry name" value="XPRTase"/>
    <property type="match status" value="1"/>
</dbReference>
<dbReference type="PANTHER" id="PTHR43864">
    <property type="entry name" value="HYPOXANTHINE/GUANINE PHOSPHORIBOSYLTRANSFERASE"/>
    <property type="match status" value="1"/>
</dbReference>
<dbReference type="PANTHER" id="PTHR43864:SF1">
    <property type="entry name" value="XANTHINE PHOSPHORIBOSYLTRANSFERASE"/>
    <property type="match status" value="1"/>
</dbReference>
<dbReference type="Pfam" id="PF00156">
    <property type="entry name" value="Pribosyltran"/>
    <property type="match status" value="1"/>
</dbReference>
<dbReference type="SUPFAM" id="SSF53271">
    <property type="entry name" value="PRTase-like"/>
    <property type="match status" value="1"/>
</dbReference>
<protein>
    <recommendedName>
        <fullName evidence="1">Xanthine phosphoribosyltransferase</fullName>
        <shortName evidence="1">XPRTase</shortName>
        <ecNumber evidence="1">2.4.2.22</ecNumber>
    </recommendedName>
</protein>